<feature type="signal peptide" evidence="1">
    <location>
        <begin position="1"/>
        <end position="28"/>
    </location>
</feature>
<feature type="chain" id="PRO_0000312878" description="Protein shisa-5">
    <location>
        <begin position="29"/>
        <end position="240"/>
    </location>
</feature>
<feature type="topological domain" description="Extracellular" evidence="1">
    <location>
        <begin position="29"/>
        <end position="105"/>
    </location>
</feature>
<feature type="transmembrane region" description="Helical" evidence="1">
    <location>
        <begin position="106"/>
        <end position="126"/>
    </location>
</feature>
<feature type="topological domain" description="Cytoplasmic" evidence="1">
    <location>
        <begin position="127"/>
        <end position="240"/>
    </location>
</feature>
<feature type="splice variant" id="VSP_029953" description="In isoform 3 and isoform 4." evidence="4 6 7">
    <location>
        <begin position="1"/>
        <end position="103"/>
    </location>
</feature>
<feature type="splice variant" id="VSP_029954" description="In isoform 2." evidence="5">
    <location>
        <begin position="1"/>
        <end position="31"/>
    </location>
</feature>
<feature type="splice variant" id="VSP_055712" description="In isoform 5." evidence="8">
    <location>
        <begin position="71"/>
        <end position="77"/>
    </location>
</feature>
<feature type="splice variant" id="VSP_029955" description="In isoform 3 and isoform 4." evidence="4 6 7">
    <original>S</original>
    <variation>M</variation>
    <location>
        <position position="104"/>
    </location>
</feature>
<feature type="splice variant" id="VSP_029956" description="In isoform 4." evidence="7">
    <original>GAAAPYPASQPPYNPAYMDAPKAAL</original>
    <variation>ECPCQL</variation>
    <location>
        <begin position="216"/>
        <end position="240"/>
    </location>
</feature>
<feature type="sequence variant" id="VAR_054031" description="In dbSNP:rs35750010.">
    <original>G</original>
    <variation>R</variation>
    <location>
        <position position="216"/>
    </location>
</feature>
<organism>
    <name type="scientific">Homo sapiens</name>
    <name type="common">Human</name>
    <dbReference type="NCBI Taxonomy" id="9606"/>
    <lineage>
        <taxon>Eukaryota</taxon>
        <taxon>Metazoa</taxon>
        <taxon>Chordata</taxon>
        <taxon>Craniata</taxon>
        <taxon>Vertebrata</taxon>
        <taxon>Euteleostomi</taxon>
        <taxon>Mammalia</taxon>
        <taxon>Eutheria</taxon>
        <taxon>Euarchontoglires</taxon>
        <taxon>Primates</taxon>
        <taxon>Haplorrhini</taxon>
        <taxon>Catarrhini</taxon>
        <taxon>Hominidae</taxon>
        <taxon>Homo</taxon>
    </lineage>
</organism>
<name>SHSA5_HUMAN</name>
<comment type="function">
    <text evidence="2">Can induce apoptosis in a caspase-dependent manner and plays a role in p53/TP53-dependent apoptosis.</text>
</comment>
<comment type="subunit">
    <text evidence="3">Interacts with PDCD6; PDCD6 can stabilize SHISA5.</text>
</comment>
<comment type="interaction">
    <interactant intactId="EBI-2115556">
        <id>Q8N114</id>
    </interactant>
    <interactant intactId="EBI-4320739">
        <id>Q9NZC7</id>
        <label>WWOX</label>
    </interactant>
    <organismsDiffer>false</organismsDiffer>
    <experiments>2</experiments>
</comment>
<comment type="interaction">
    <interactant intactId="EBI-2115556">
        <id>Q8N114</id>
    </interactant>
    <interactant intactId="EBI-309164">
        <id>P12815</id>
        <label>Pdcd6</label>
    </interactant>
    <organismsDiffer>true</organismsDiffer>
    <experiments>5</experiments>
</comment>
<comment type="interaction">
    <interactant intactId="EBI-13369834">
        <id>Q8N114-3</id>
    </interactant>
    <interactant intactId="EBI-714543">
        <id>Q15041</id>
        <label>ARL6IP1</label>
    </interactant>
    <organismsDiffer>false</organismsDiffer>
    <experiments>3</experiments>
</comment>
<comment type="interaction">
    <interactant intactId="EBI-13369834">
        <id>Q8N114-3</id>
    </interactant>
    <interactant intactId="EBI-2806959">
        <id>Q6ICB0</id>
        <label>DESI1</label>
    </interactant>
    <organismsDiffer>false</organismsDiffer>
    <experiments>3</experiments>
</comment>
<comment type="interaction">
    <interactant intactId="EBI-13369834">
        <id>Q8N114-3</id>
    </interactant>
    <interactant intactId="EBI-745846">
        <id>P57086</id>
        <label>SCAND1</label>
    </interactant>
    <organismsDiffer>false</organismsDiffer>
    <experiments>3</experiments>
</comment>
<comment type="interaction">
    <interactant intactId="EBI-13369834">
        <id>Q8N114-3</id>
    </interactant>
    <interactant intactId="EBI-347996">
        <id>O43765</id>
        <label>SGTA</label>
    </interactant>
    <organismsDiffer>false</organismsDiffer>
    <experiments>3</experiments>
</comment>
<comment type="interaction">
    <interactant intactId="EBI-13369834">
        <id>Q8N114-3</id>
    </interactant>
    <interactant intactId="EBI-744081">
        <id>Q96EQ0</id>
        <label>SGTB</label>
    </interactant>
    <organismsDiffer>false</organismsDiffer>
    <experiments>3</experiments>
</comment>
<comment type="interaction">
    <interactant intactId="EBI-13369834">
        <id>Q8N114-3</id>
    </interactant>
    <interactant intactId="EBI-11343401">
        <id>Q9NYZ1</id>
        <label>TVP23B</label>
    </interactant>
    <organismsDiffer>false</organismsDiffer>
    <experiments>3</experiments>
</comment>
<comment type="subcellular location">
    <subcellularLocation>
        <location evidence="2">Endoplasmic reticulum membrane</location>
        <topology evidence="2">Single-pass type I membrane protein</topology>
    </subcellularLocation>
    <subcellularLocation>
        <location evidence="2">Nucleus membrane</location>
    </subcellularLocation>
</comment>
<comment type="alternative products">
    <event type="alternative splicing"/>
    <isoform>
        <id>Q8N114-1</id>
        <name>1</name>
        <sequence type="displayed"/>
    </isoform>
    <isoform>
        <id>Q8N114-2</id>
        <name>2</name>
        <sequence type="described" ref="VSP_029954"/>
    </isoform>
    <isoform>
        <id>Q8N114-3</id>
        <name>3</name>
        <sequence type="described" ref="VSP_029953 VSP_029955"/>
    </isoform>
    <isoform>
        <id>Q8N114-4</id>
        <name>4</name>
        <sequence type="described" ref="VSP_029953 VSP_029955 VSP_029956"/>
    </isoform>
    <isoform>
        <id>Q8N114-5</id>
        <name>5</name>
        <sequence type="described" ref="VSP_055712"/>
    </isoform>
</comment>
<comment type="induction">
    <text evidence="2">Induced in a p53/TP53-dependent manner in response to cellular stress.</text>
</comment>
<comment type="domain">
    <text evidence="2">The proline-rich region is required for endoplasmic reticulum localization.</text>
</comment>
<comment type="similarity">
    <text evidence="8">Belongs to the shisa family.</text>
</comment>
<gene>
    <name type="primary">SHISA5</name>
    <name type="synonym">SCOTIN</name>
    <name type="ORF">PSEC0133</name>
</gene>
<keyword id="KW-0025">Alternative splicing</keyword>
<keyword id="KW-0053">Apoptosis</keyword>
<keyword id="KW-0256">Endoplasmic reticulum</keyword>
<keyword id="KW-0472">Membrane</keyword>
<keyword id="KW-0539">Nucleus</keyword>
<keyword id="KW-1267">Proteomics identification</keyword>
<keyword id="KW-1185">Reference proteome</keyword>
<keyword id="KW-0732">Signal</keyword>
<keyword id="KW-0812">Transmembrane</keyword>
<keyword id="KW-1133">Transmembrane helix</keyword>
<evidence type="ECO:0000255" key="1"/>
<evidence type="ECO:0000269" key="2">
    <source>
    </source>
</evidence>
<evidence type="ECO:0000269" key="3">
    <source>
    </source>
</evidence>
<evidence type="ECO:0000303" key="4">
    <source>
    </source>
</evidence>
<evidence type="ECO:0000303" key="5">
    <source>
    </source>
</evidence>
<evidence type="ECO:0000303" key="6">
    <source>
    </source>
</evidence>
<evidence type="ECO:0000303" key="7">
    <source>
    </source>
</evidence>
<evidence type="ECO:0000305" key="8"/>
<protein>
    <recommendedName>
        <fullName>Protein shisa-5</fullName>
    </recommendedName>
    <alternativeName>
        <fullName>Putative NF-kappa-B-activating protein 120</fullName>
    </alternativeName>
    <alternativeName>
        <fullName>Scotin</fullName>
    </alternativeName>
</protein>
<dbReference type="EMBL" id="AF520698">
    <property type="protein sequence ID" value="AAM74232.1"/>
    <property type="molecule type" value="mRNA"/>
</dbReference>
<dbReference type="EMBL" id="AH011688">
    <property type="protein sequence ID" value="AAM74235.1"/>
    <property type="molecule type" value="Genomic_DNA"/>
</dbReference>
<dbReference type="EMBL" id="AB097007">
    <property type="protein sequence ID" value="BAC77360.1"/>
    <property type="molecule type" value="mRNA"/>
</dbReference>
<dbReference type="EMBL" id="AK056328">
    <property type="protein sequence ID" value="BAB71152.1"/>
    <property type="molecule type" value="mRNA"/>
</dbReference>
<dbReference type="EMBL" id="AK075441">
    <property type="protein sequence ID" value="BAC11623.1"/>
    <property type="molecule type" value="mRNA"/>
</dbReference>
<dbReference type="EMBL" id="AK124652">
    <property type="protein sequence ID" value="BAG54061.1"/>
    <property type="molecule type" value="mRNA"/>
</dbReference>
<dbReference type="EMBL" id="AL117413">
    <property type="protein sequence ID" value="CAH10718.1"/>
    <property type="molecule type" value="mRNA"/>
</dbReference>
<dbReference type="EMBL" id="AL832568">
    <property type="protein sequence ID" value="CAH10587.1"/>
    <property type="molecule type" value="mRNA"/>
</dbReference>
<dbReference type="EMBL" id="AC104448">
    <property type="status" value="NOT_ANNOTATED_CDS"/>
    <property type="molecule type" value="Genomic_DNA"/>
</dbReference>
<dbReference type="EMBL" id="AC134772">
    <property type="status" value="NOT_ANNOTATED_CDS"/>
    <property type="molecule type" value="Genomic_DNA"/>
</dbReference>
<dbReference type="EMBL" id="CH471055">
    <property type="protein sequence ID" value="EAW64885.1"/>
    <property type="molecule type" value="Genomic_DNA"/>
</dbReference>
<dbReference type="EMBL" id="CH471055">
    <property type="protein sequence ID" value="EAW64887.1"/>
    <property type="molecule type" value="Genomic_DNA"/>
</dbReference>
<dbReference type="EMBL" id="BC001463">
    <property type="protein sequence ID" value="AAH01463.2"/>
    <property type="molecule type" value="mRNA"/>
</dbReference>
<dbReference type="CCDS" id="CCDS2770.1">
    <molecule id="Q8N114-1"/>
</dbReference>
<dbReference type="CCDS" id="CCDS63621.1">
    <molecule id="Q8N114-3"/>
</dbReference>
<dbReference type="CCDS" id="CCDS63622.1">
    <molecule id="Q8N114-2"/>
</dbReference>
<dbReference type="CCDS" id="CCDS63623.1">
    <molecule id="Q8N114-5"/>
</dbReference>
<dbReference type="RefSeq" id="NP_001258994.1">
    <molecule id="Q8N114-5"/>
    <property type="nucleotide sequence ID" value="NM_001272065.3"/>
</dbReference>
<dbReference type="RefSeq" id="NP_001258995.1">
    <molecule id="Q8N114-2"/>
    <property type="nucleotide sequence ID" value="NM_001272066.2"/>
</dbReference>
<dbReference type="RefSeq" id="NP_001258996.1">
    <molecule id="Q8N114-2"/>
    <property type="nucleotide sequence ID" value="NM_001272067.2"/>
</dbReference>
<dbReference type="RefSeq" id="NP_001258997.1">
    <molecule id="Q8N114-2"/>
    <property type="nucleotide sequence ID" value="NM_001272068.2"/>
</dbReference>
<dbReference type="RefSeq" id="NP_001259011.1">
    <molecule id="Q8N114-3"/>
    <property type="nucleotide sequence ID" value="NM_001272082.4"/>
</dbReference>
<dbReference type="RefSeq" id="NP_001259012.1">
    <molecule id="Q8N114-4"/>
    <property type="nucleotide sequence ID" value="NM_001272083.4"/>
</dbReference>
<dbReference type="RefSeq" id="NP_057563.3">
    <molecule id="Q8N114-1"/>
    <property type="nucleotide sequence ID" value="NM_016479.4"/>
</dbReference>
<dbReference type="RefSeq" id="XP_005265262.1">
    <property type="nucleotide sequence ID" value="XM_005265205.1"/>
</dbReference>
<dbReference type="RefSeq" id="XP_006713251.1">
    <property type="nucleotide sequence ID" value="XM_006713188.2"/>
</dbReference>
<dbReference type="RefSeq" id="XP_011532098.1">
    <property type="nucleotide sequence ID" value="XM_011533796.1"/>
</dbReference>
<dbReference type="RefSeq" id="XP_054202726.1">
    <molecule id="Q8N114-2"/>
    <property type="nucleotide sequence ID" value="XM_054346751.1"/>
</dbReference>
<dbReference type="RefSeq" id="XP_054202727.1">
    <molecule id="Q8N114-2"/>
    <property type="nucleotide sequence ID" value="XM_054346752.1"/>
</dbReference>
<dbReference type="BioGRID" id="119403">
    <property type="interactions" value="12"/>
</dbReference>
<dbReference type="ELM" id="Q8N114"/>
<dbReference type="FunCoup" id="Q8N114">
    <property type="interactions" value="347"/>
</dbReference>
<dbReference type="IntAct" id="Q8N114">
    <property type="interactions" value="10"/>
</dbReference>
<dbReference type="STRING" id="9606.ENSP00000296444"/>
<dbReference type="TCDB" id="8.A.83.1.7">
    <property type="family name" value="the shisa6 regulator of short-term neuronal synaptic plasticity (shisa) family"/>
</dbReference>
<dbReference type="GlyCosmos" id="Q8N114">
    <property type="glycosylation" value="1 site, 1 glycan"/>
</dbReference>
<dbReference type="GlyGen" id="Q8N114">
    <property type="glycosylation" value="1 site, 1 O-linked glycan (1 site)"/>
</dbReference>
<dbReference type="iPTMnet" id="Q8N114"/>
<dbReference type="PhosphoSitePlus" id="Q8N114"/>
<dbReference type="BioMuta" id="SHISA5"/>
<dbReference type="DMDM" id="74714697"/>
<dbReference type="MassIVE" id="Q8N114"/>
<dbReference type="PaxDb" id="9606-ENSP00000296444"/>
<dbReference type="PeptideAtlas" id="Q8N114"/>
<dbReference type="ProteomicsDB" id="30355"/>
<dbReference type="ProteomicsDB" id="71515">
    <molecule id="Q8N114-1"/>
</dbReference>
<dbReference type="ProteomicsDB" id="71516">
    <molecule id="Q8N114-2"/>
</dbReference>
<dbReference type="ProteomicsDB" id="71517">
    <molecule id="Q8N114-3"/>
</dbReference>
<dbReference type="Antibodypedia" id="30112">
    <property type="antibodies" value="119 antibodies from 17 providers"/>
</dbReference>
<dbReference type="DNASU" id="51246"/>
<dbReference type="Ensembl" id="ENST00000296444.7">
    <molecule id="Q8N114-1"/>
    <property type="protein sequence ID" value="ENSP00000296444.2"/>
    <property type="gene ID" value="ENSG00000164054.17"/>
</dbReference>
<dbReference type="Ensembl" id="ENST00000426002.5">
    <molecule id="Q8N114-3"/>
    <property type="protein sequence ID" value="ENSP00000390388.1"/>
    <property type="gene ID" value="ENSG00000164054.17"/>
</dbReference>
<dbReference type="Ensembl" id="ENST00000442747.5">
    <molecule id="Q8N114-2"/>
    <property type="protein sequence ID" value="ENSP00000408223.1"/>
    <property type="gene ID" value="ENSG00000164054.17"/>
</dbReference>
<dbReference type="Ensembl" id="ENST00000443308.6">
    <molecule id="Q8N114-5"/>
    <property type="protein sequence ID" value="ENSP00000395373.2"/>
    <property type="gene ID" value="ENSG00000164054.17"/>
</dbReference>
<dbReference type="Ensembl" id="ENST00000444115.5">
    <molecule id="Q8N114-2"/>
    <property type="protein sequence ID" value="ENSP00000407957.1"/>
    <property type="gene ID" value="ENSG00000164054.17"/>
</dbReference>
<dbReference type="Ensembl" id="ENST00000619810.4">
    <molecule id="Q8N114-2"/>
    <property type="protein sequence ID" value="ENSP00000484992.1"/>
    <property type="gene ID" value="ENSG00000164054.17"/>
</dbReference>
<dbReference type="GeneID" id="51246"/>
<dbReference type="KEGG" id="hsa:51246"/>
<dbReference type="MANE-Select" id="ENST00000296444.7">
    <property type="protein sequence ID" value="ENSP00000296444.2"/>
    <property type="RefSeq nucleotide sequence ID" value="NM_016479.6"/>
    <property type="RefSeq protein sequence ID" value="NP_057563.3"/>
</dbReference>
<dbReference type="UCSC" id="uc003ctm.4">
    <molecule id="Q8N114-1"/>
    <property type="organism name" value="human"/>
</dbReference>
<dbReference type="AGR" id="HGNC:30376"/>
<dbReference type="CTD" id="51246"/>
<dbReference type="DisGeNET" id="51246"/>
<dbReference type="GeneCards" id="SHISA5"/>
<dbReference type="HGNC" id="HGNC:30376">
    <property type="gene designation" value="SHISA5"/>
</dbReference>
<dbReference type="HPA" id="ENSG00000164054">
    <property type="expression patterns" value="Low tissue specificity"/>
</dbReference>
<dbReference type="MalaCards" id="SHISA5"/>
<dbReference type="MIM" id="607290">
    <property type="type" value="gene"/>
</dbReference>
<dbReference type="neXtProt" id="NX_Q8N114"/>
<dbReference type="OpenTargets" id="ENSG00000164054"/>
<dbReference type="PharmGKB" id="PA162403295"/>
<dbReference type="VEuPathDB" id="HostDB:ENSG00000164054"/>
<dbReference type="eggNOG" id="ENOG502S2Y4">
    <property type="taxonomic scope" value="Eukaryota"/>
</dbReference>
<dbReference type="GeneTree" id="ENSGT00390000008296"/>
<dbReference type="HOGENOM" id="CLU_093192_1_0_1"/>
<dbReference type="InParanoid" id="Q8N114"/>
<dbReference type="OMA" id="YKACRRQ"/>
<dbReference type="OrthoDB" id="9949323at2759"/>
<dbReference type="PAN-GO" id="Q8N114">
    <property type="GO annotations" value="1 GO annotation based on evolutionary models"/>
</dbReference>
<dbReference type="PhylomeDB" id="Q8N114"/>
<dbReference type="TreeFam" id="TF332572"/>
<dbReference type="PathwayCommons" id="Q8N114"/>
<dbReference type="Reactome" id="R-HSA-381426">
    <property type="pathway name" value="Regulation of Insulin-like Growth Factor (IGF) transport and uptake by Insulin-like Growth Factor Binding Proteins (IGFBPs)"/>
</dbReference>
<dbReference type="Reactome" id="R-HSA-8957275">
    <property type="pathway name" value="Post-translational protein phosphorylation"/>
</dbReference>
<dbReference type="SignaLink" id="Q8N114"/>
<dbReference type="BioGRID-ORCS" id="51246">
    <property type="hits" value="17 hits in 1162 CRISPR screens"/>
</dbReference>
<dbReference type="CD-CODE" id="8DB3D246">
    <property type="entry name" value="SCOTIN condensate"/>
</dbReference>
<dbReference type="ChiTaRS" id="SHISA5">
    <property type="organism name" value="human"/>
</dbReference>
<dbReference type="GenomeRNAi" id="51246"/>
<dbReference type="Pharos" id="Q8N114">
    <property type="development level" value="Tbio"/>
</dbReference>
<dbReference type="PRO" id="PR:Q8N114"/>
<dbReference type="Proteomes" id="UP000005640">
    <property type="component" value="Chromosome 3"/>
</dbReference>
<dbReference type="RNAct" id="Q8N114">
    <property type="molecule type" value="protein"/>
</dbReference>
<dbReference type="Bgee" id="ENSG00000164054">
    <property type="expression patterns" value="Expressed in oviduct epithelium and 183 other cell types or tissues"/>
</dbReference>
<dbReference type="ExpressionAtlas" id="Q8N114">
    <property type="expression patterns" value="baseline and differential"/>
</dbReference>
<dbReference type="GO" id="GO:0005783">
    <property type="term" value="C:endoplasmic reticulum"/>
    <property type="evidence" value="ECO:0000318"/>
    <property type="project" value="GO_Central"/>
</dbReference>
<dbReference type="GO" id="GO:0005788">
    <property type="term" value="C:endoplasmic reticulum lumen"/>
    <property type="evidence" value="ECO:0000304"/>
    <property type="project" value="Reactome"/>
</dbReference>
<dbReference type="GO" id="GO:0005789">
    <property type="term" value="C:endoplasmic reticulum membrane"/>
    <property type="evidence" value="ECO:0007669"/>
    <property type="project" value="UniProtKB-SubCell"/>
</dbReference>
<dbReference type="GO" id="GO:0031965">
    <property type="term" value="C:nuclear membrane"/>
    <property type="evidence" value="ECO:0007669"/>
    <property type="project" value="UniProtKB-SubCell"/>
</dbReference>
<dbReference type="GO" id="GO:0050699">
    <property type="term" value="F:WW domain binding"/>
    <property type="evidence" value="ECO:0000353"/>
    <property type="project" value="UniProtKB"/>
</dbReference>
<dbReference type="GO" id="GO:0042771">
    <property type="term" value="P:intrinsic apoptotic signaling pathway in response to DNA damage by p53 class mediator"/>
    <property type="evidence" value="ECO:0007669"/>
    <property type="project" value="Ensembl"/>
</dbReference>
<dbReference type="GO" id="GO:0043123">
    <property type="term" value="P:positive regulation of canonical NF-kappaB signal transduction"/>
    <property type="evidence" value="ECO:0007001"/>
    <property type="project" value="UniProtKB"/>
</dbReference>
<dbReference type="InterPro" id="IPR026910">
    <property type="entry name" value="Shisa"/>
</dbReference>
<dbReference type="InterPro" id="IPR053891">
    <property type="entry name" value="Shisa_N"/>
</dbReference>
<dbReference type="PANTHER" id="PTHR31395:SF14">
    <property type="entry name" value="PROTEIN SHISA-5"/>
    <property type="match status" value="1"/>
</dbReference>
<dbReference type="PANTHER" id="PTHR31395">
    <property type="entry name" value="SHISA"/>
    <property type="match status" value="1"/>
</dbReference>
<dbReference type="Pfam" id="PF13908">
    <property type="entry name" value="Shisa_N"/>
    <property type="match status" value="1"/>
</dbReference>
<reference key="1">
    <citation type="journal article" date="2002" name="J. Cell Biol.">
        <title>Scotin, a novel p53-inducible proapoptotic protein located in the ER and the nuclear membrane.</title>
        <authorList>
            <person name="Bourdon J.-C."/>
            <person name="Renzing J."/>
            <person name="Robertson P.L."/>
            <person name="Fernandes K.N."/>
            <person name="Lane D.P."/>
        </authorList>
    </citation>
    <scope>NUCLEOTIDE SEQUENCE [GENOMIC DNA / MRNA] (ISOFORM 1)</scope>
    <scope>FUNCTION</scope>
    <scope>INDUCTION</scope>
    <scope>DOMAIN</scope>
    <scope>SUBCELLULAR LOCATION</scope>
</reference>
<reference key="2">
    <citation type="journal article" date="2003" name="Oncogene">
        <title>Large-scale identification and characterization of human genes that activate NF-kappaB and MAPK signaling pathways.</title>
        <authorList>
            <person name="Matsuda A."/>
            <person name="Suzuki Y."/>
            <person name="Honda G."/>
            <person name="Muramatsu S."/>
            <person name="Matsuzaki O."/>
            <person name="Nagano Y."/>
            <person name="Doi T."/>
            <person name="Shimotohno K."/>
            <person name="Harada T."/>
            <person name="Nishida E."/>
            <person name="Hayashi H."/>
            <person name="Sugano S."/>
        </authorList>
    </citation>
    <scope>NUCLEOTIDE SEQUENCE [LARGE SCALE MRNA] (ISOFORM 3)</scope>
    <source>
        <tissue>Lung</tissue>
    </source>
</reference>
<reference key="3">
    <citation type="journal article" date="2004" name="Nat. Genet.">
        <title>Complete sequencing and characterization of 21,243 full-length human cDNAs.</title>
        <authorList>
            <person name="Ota T."/>
            <person name="Suzuki Y."/>
            <person name="Nishikawa T."/>
            <person name="Otsuki T."/>
            <person name="Sugiyama T."/>
            <person name="Irie R."/>
            <person name="Wakamatsu A."/>
            <person name="Hayashi K."/>
            <person name="Sato H."/>
            <person name="Nagai K."/>
            <person name="Kimura K."/>
            <person name="Makita H."/>
            <person name="Sekine M."/>
            <person name="Obayashi M."/>
            <person name="Nishi T."/>
            <person name="Shibahara T."/>
            <person name="Tanaka T."/>
            <person name="Ishii S."/>
            <person name="Yamamoto J."/>
            <person name="Saito K."/>
            <person name="Kawai Y."/>
            <person name="Isono Y."/>
            <person name="Nakamura Y."/>
            <person name="Nagahari K."/>
            <person name="Murakami K."/>
            <person name="Yasuda T."/>
            <person name="Iwayanagi T."/>
            <person name="Wagatsuma M."/>
            <person name="Shiratori A."/>
            <person name="Sudo H."/>
            <person name="Hosoiri T."/>
            <person name="Kaku Y."/>
            <person name="Kodaira H."/>
            <person name="Kondo H."/>
            <person name="Sugawara M."/>
            <person name="Takahashi M."/>
            <person name="Kanda K."/>
            <person name="Yokoi T."/>
            <person name="Furuya T."/>
            <person name="Kikkawa E."/>
            <person name="Omura Y."/>
            <person name="Abe K."/>
            <person name="Kamihara K."/>
            <person name="Katsuta N."/>
            <person name="Sato K."/>
            <person name="Tanikawa M."/>
            <person name="Yamazaki M."/>
            <person name="Ninomiya K."/>
            <person name="Ishibashi T."/>
            <person name="Yamashita H."/>
            <person name="Murakawa K."/>
            <person name="Fujimori K."/>
            <person name="Tanai H."/>
            <person name="Kimata M."/>
            <person name="Watanabe M."/>
            <person name="Hiraoka S."/>
            <person name="Chiba Y."/>
            <person name="Ishida S."/>
            <person name="Ono Y."/>
            <person name="Takiguchi S."/>
            <person name="Watanabe S."/>
            <person name="Yosida M."/>
            <person name="Hotuta T."/>
            <person name="Kusano J."/>
            <person name="Kanehori K."/>
            <person name="Takahashi-Fujii A."/>
            <person name="Hara H."/>
            <person name="Tanase T.-O."/>
            <person name="Nomura Y."/>
            <person name="Togiya S."/>
            <person name="Komai F."/>
            <person name="Hara R."/>
            <person name="Takeuchi K."/>
            <person name="Arita M."/>
            <person name="Imose N."/>
            <person name="Musashino K."/>
            <person name="Yuuki H."/>
            <person name="Oshima A."/>
            <person name="Sasaki N."/>
            <person name="Aotsuka S."/>
            <person name="Yoshikawa Y."/>
            <person name="Matsunawa H."/>
            <person name="Ichihara T."/>
            <person name="Shiohata N."/>
            <person name="Sano S."/>
            <person name="Moriya S."/>
            <person name="Momiyama H."/>
            <person name="Satoh N."/>
            <person name="Takami S."/>
            <person name="Terashima Y."/>
            <person name="Suzuki O."/>
            <person name="Nakagawa S."/>
            <person name="Senoh A."/>
            <person name="Mizoguchi H."/>
            <person name="Goto Y."/>
            <person name="Shimizu F."/>
            <person name="Wakebe H."/>
            <person name="Hishigaki H."/>
            <person name="Watanabe T."/>
            <person name="Sugiyama A."/>
            <person name="Takemoto M."/>
            <person name="Kawakami B."/>
            <person name="Yamazaki M."/>
            <person name="Watanabe K."/>
            <person name="Kumagai A."/>
            <person name="Itakura S."/>
            <person name="Fukuzumi Y."/>
            <person name="Fujimori Y."/>
            <person name="Komiyama M."/>
            <person name="Tashiro H."/>
            <person name="Tanigami A."/>
            <person name="Fujiwara T."/>
            <person name="Ono T."/>
            <person name="Yamada K."/>
            <person name="Fujii Y."/>
            <person name="Ozaki K."/>
            <person name="Hirao M."/>
            <person name="Ohmori Y."/>
            <person name="Kawabata A."/>
            <person name="Hikiji T."/>
            <person name="Kobatake N."/>
            <person name="Inagaki H."/>
            <person name="Ikema Y."/>
            <person name="Okamoto S."/>
            <person name="Okitani R."/>
            <person name="Kawakami T."/>
            <person name="Noguchi S."/>
            <person name="Itoh T."/>
            <person name="Shigeta K."/>
            <person name="Senba T."/>
            <person name="Matsumura K."/>
            <person name="Nakajima Y."/>
            <person name="Mizuno T."/>
            <person name="Morinaga M."/>
            <person name="Sasaki M."/>
            <person name="Togashi T."/>
            <person name="Oyama M."/>
            <person name="Hata H."/>
            <person name="Watanabe M."/>
            <person name="Komatsu T."/>
            <person name="Mizushima-Sugano J."/>
            <person name="Satoh T."/>
            <person name="Shirai Y."/>
            <person name="Takahashi Y."/>
            <person name="Nakagawa K."/>
            <person name="Okumura K."/>
            <person name="Nagase T."/>
            <person name="Nomura N."/>
            <person name="Kikuchi H."/>
            <person name="Masuho Y."/>
            <person name="Yamashita R."/>
            <person name="Nakai K."/>
            <person name="Yada T."/>
            <person name="Nakamura Y."/>
            <person name="Ohara O."/>
            <person name="Isogai T."/>
            <person name="Sugano S."/>
        </authorList>
    </citation>
    <scope>NUCLEOTIDE SEQUENCE [LARGE SCALE MRNA] (ISOFORMS 1 AND 2)</scope>
    <source>
        <tissue>Amygdala</tissue>
        <tissue>Placenta</tissue>
        <tissue>Teratocarcinoma</tissue>
    </source>
</reference>
<reference key="4">
    <citation type="journal article" date="2007" name="BMC Genomics">
        <title>The full-ORF clone resource of the German cDNA consortium.</title>
        <authorList>
            <person name="Bechtel S."/>
            <person name="Rosenfelder H."/>
            <person name="Duda A."/>
            <person name="Schmidt C.P."/>
            <person name="Ernst U."/>
            <person name="Wellenreuther R."/>
            <person name="Mehrle A."/>
            <person name="Schuster C."/>
            <person name="Bahr A."/>
            <person name="Bloecker H."/>
            <person name="Heubner D."/>
            <person name="Hoerlein A."/>
            <person name="Michel G."/>
            <person name="Wedler H."/>
            <person name="Koehrer K."/>
            <person name="Ottenwaelder B."/>
            <person name="Poustka A."/>
            <person name="Wiemann S."/>
            <person name="Schupp I."/>
        </authorList>
    </citation>
    <scope>NUCLEOTIDE SEQUENCE [LARGE SCALE MRNA] (ISOFORMS 3 AND 4)</scope>
    <source>
        <tissue>Brain</tissue>
        <tissue>Kidney</tissue>
    </source>
</reference>
<reference key="5">
    <citation type="journal article" date="2004" name="Nature">
        <title>The DNA sequence and comparative analysis of human chromosome 5.</title>
        <authorList>
            <person name="Schmutz J."/>
            <person name="Martin J."/>
            <person name="Terry A."/>
            <person name="Couronne O."/>
            <person name="Grimwood J."/>
            <person name="Lowry S."/>
            <person name="Gordon L.A."/>
            <person name="Scott D."/>
            <person name="Xie G."/>
            <person name="Huang W."/>
            <person name="Hellsten U."/>
            <person name="Tran-Gyamfi M."/>
            <person name="She X."/>
            <person name="Prabhakar S."/>
            <person name="Aerts A."/>
            <person name="Altherr M."/>
            <person name="Bajorek E."/>
            <person name="Black S."/>
            <person name="Branscomb E."/>
            <person name="Caoile C."/>
            <person name="Challacombe J.F."/>
            <person name="Chan Y.M."/>
            <person name="Denys M."/>
            <person name="Detter J.C."/>
            <person name="Escobar J."/>
            <person name="Flowers D."/>
            <person name="Fotopulos D."/>
            <person name="Glavina T."/>
            <person name="Gomez M."/>
            <person name="Gonzales E."/>
            <person name="Goodstein D."/>
            <person name="Grigoriev I."/>
            <person name="Groza M."/>
            <person name="Hammon N."/>
            <person name="Hawkins T."/>
            <person name="Haydu L."/>
            <person name="Israni S."/>
            <person name="Jett J."/>
            <person name="Kadner K."/>
            <person name="Kimball H."/>
            <person name="Kobayashi A."/>
            <person name="Lopez F."/>
            <person name="Lou Y."/>
            <person name="Martinez D."/>
            <person name="Medina C."/>
            <person name="Morgan J."/>
            <person name="Nandkeshwar R."/>
            <person name="Noonan J.P."/>
            <person name="Pitluck S."/>
            <person name="Pollard M."/>
            <person name="Predki P."/>
            <person name="Priest J."/>
            <person name="Ramirez L."/>
            <person name="Retterer J."/>
            <person name="Rodriguez A."/>
            <person name="Rogers S."/>
            <person name="Salamov A."/>
            <person name="Salazar A."/>
            <person name="Thayer N."/>
            <person name="Tice H."/>
            <person name="Tsai M."/>
            <person name="Ustaszewska A."/>
            <person name="Vo N."/>
            <person name="Wheeler J."/>
            <person name="Wu K."/>
            <person name="Yang J."/>
            <person name="Dickson M."/>
            <person name="Cheng J.-F."/>
            <person name="Eichler E.E."/>
            <person name="Olsen A."/>
            <person name="Pennacchio L.A."/>
            <person name="Rokhsar D.S."/>
            <person name="Richardson P."/>
            <person name="Lucas S.M."/>
            <person name="Myers R.M."/>
            <person name="Rubin E.M."/>
        </authorList>
    </citation>
    <scope>NUCLEOTIDE SEQUENCE [LARGE SCALE GENOMIC DNA]</scope>
</reference>
<reference key="6">
    <citation type="submission" date="2005-07" db="EMBL/GenBank/DDBJ databases">
        <authorList>
            <person name="Mural R.J."/>
            <person name="Istrail S."/>
            <person name="Sutton G.G."/>
            <person name="Florea L."/>
            <person name="Halpern A.L."/>
            <person name="Mobarry C.M."/>
            <person name="Lippert R."/>
            <person name="Walenz B."/>
            <person name="Shatkay H."/>
            <person name="Dew I."/>
            <person name="Miller J.R."/>
            <person name="Flanigan M.J."/>
            <person name="Edwards N.J."/>
            <person name="Bolanos R."/>
            <person name="Fasulo D."/>
            <person name="Halldorsson B.V."/>
            <person name="Hannenhalli S."/>
            <person name="Turner R."/>
            <person name="Yooseph S."/>
            <person name="Lu F."/>
            <person name="Nusskern D.R."/>
            <person name="Shue B.C."/>
            <person name="Zheng X.H."/>
            <person name="Zhong F."/>
            <person name="Delcher A.L."/>
            <person name="Huson D.H."/>
            <person name="Kravitz S.A."/>
            <person name="Mouchard L."/>
            <person name="Reinert K."/>
            <person name="Remington K.A."/>
            <person name="Clark A.G."/>
            <person name="Waterman M.S."/>
            <person name="Eichler E.E."/>
            <person name="Adams M.D."/>
            <person name="Hunkapiller M.W."/>
            <person name="Myers E.W."/>
            <person name="Venter J.C."/>
        </authorList>
    </citation>
    <scope>NUCLEOTIDE SEQUENCE [LARGE SCALE GENOMIC DNA]</scope>
</reference>
<reference key="7">
    <citation type="journal article" date="2004" name="Genome Res.">
        <title>The status, quality, and expansion of the NIH full-length cDNA project: the Mammalian Gene Collection (MGC).</title>
        <authorList>
            <consortium name="The MGC Project Team"/>
        </authorList>
    </citation>
    <scope>NUCLEOTIDE SEQUENCE [LARGE SCALE MRNA] (ISOFORM 3)</scope>
    <source>
        <tissue>Placenta</tissue>
    </source>
</reference>
<reference key="8">
    <citation type="journal article" date="2007" name="Arch. Biochem. Biophys.">
        <title>The calcium binding protein ALG-2 binds and stabilizes Scotin, a p53-inducible gene product localized at the endoplasmic reticulum membrane.</title>
        <authorList>
            <person name="Draeby I."/>
            <person name="Woods Y.L."/>
            <person name="la Cour J.M."/>
            <person name="Mollerup J."/>
            <person name="Bourdon J.C."/>
            <person name="Berchtold M.W."/>
        </authorList>
    </citation>
    <scope>INTERACTION WITH PDCD6</scope>
</reference>
<accession>Q8N114</accession>
<accession>B3KW99</accession>
<accession>F8W9N8</accession>
<accession>Q69YY9</accession>
<accession>Q7Z433</accession>
<accession>Q8NHL9</accession>
<accession>Q96MW8</accession>
<accession>Q9BV58</accession>
<proteinExistence type="evidence at protein level"/>
<sequence>MTAPVPAPRILLPLLLLLLLTPPPGARGEVCMASRGLSLFPESCPDFCCGTCDDQYCCSDVLKKFVWSEERCAVPEASVPASVEPVEQLGSALRFRPGYNDPMSGFGATLAVGLTIFVLSVVTIIICFTCSCCCLYKTCRRPRPVVTTTTSTTVVHAPYPQPPSVPPSYPGPSYQGYHTMPPQPGMPAAPYPMQYPPPYPAQPMGPPAYHETLAGGAAAPYPASQPPYNPAYMDAPKAAL</sequence>